<name>O22R_FRG3G</name>
<protein>
    <recommendedName>
        <fullName>Putative helicase 022R</fullName>
        <ecNumber>3.6.4.-</ecNumber>
    </recommendedName>
</protein>
<organism>
    <name type="scientific">Frog virus 3 (isolate Goorha)</name>
    <name type="common">FV-3</name>
    <dbReference type="NCBI Taxonomy" id="654924"/>
    <lineage>
        <taxon>Viruses</taxon>
        <taxon>Varidnaviria</taxon>
        <taxon>Bamfordvirae</taxon>
        <taxon>Nucleocytoviricota</taxon>
        <taxon>Megaviricetes</taxon>
        <taxon>Pimascovirales</taxon>
        <taxon>Iridoviridae</taxon>
        <taxon>Alphairidovirinae</taxon>
        <taxon>Ranavirus</taxon>
        <taxon>Frog virus 3</taxon>
    </lineage>
</organism>
<keyword id="KW-0067">ATP-binding</keyword>
<keyword id="KW-0378">Hydrolase</keyword>
<keyword id="KW-0547">Nucleotide-binding</keyword>
<keyword id="KW-1185">Reference proteome</keyword>
<organismHost>
    <name type="scientific">Dryophytes versicolor</name>
    <name type="common">chameleon treefrog</name>
    <dbReference type="NCBI Taxonomy" id="30343"/>
</organismHost>
<organismHost>
    <name type="scientific">Lithobates pipiens</name>
    <name type="common">Northern leopard frog</name>
    <name type="synonym">Rana pipiens</name>
    <dbReference type="NCBI Taxonomy" id="8404"/>
</organismHost>
<organismHost>
    <name type="scientific">Lithobates sylvaticus</name>
    <name type="common">Wood frog</name>
    <name type="synonym">Rana sylvatica</name>
    <dbReference type="NCBI Taxonomy" id="45438"/>
</organismHost>
<organismHost>
    <name type="scientific">Notophthalmus viridescens</name>
    <name type="common">Eastern newt</name>
    <name type="synonym">Triturus viridescens</name>
    <dbReference type="NCBI Taxonomy" id="8316"/>
</organismHost>
<evidence type="ECO:0000255" key="1">
    <source>
        <dbReference type="PROSITE-ProRule" id="PRU00551"/>
    </source>
</evidence>
<evidence type="ECO:0000256" key="2">
    <source>
        <dbReference type="SAM" id="MobiDB-lite"/>
    </source>
</evidence>
<dbReference type="EC" id="3.6.4.-"/>
<dbReference type="EMBL" id="AY548484">
    <property type="protein sequence ID" value="AAT09681.1"/>
    <property type="molecule type" value="Genomic_DNA"/>
</dbReference>
<dbReference type="RefSeq" id="YP_031600.1">
    <property type="nucleotide sequence ID" value="NC_005946.1"/>
</dbReference>
<dbReference type="SMR" id="Q6GZV3"/>
<dbReference type="KEGG" id="vg:2947742"/>
<dbReference type="Proteomes" id="UP000008770">
    <property type="component" value="Segment"/>
</dbReference>
<dbReference type="GO" id="GO:0005524">
    <property type="term" value="F:ATP binding"/>
    <property type="evidence" value="ECO:0007669"/>
    <property type="project" value="UniProtKB-KW"/>
</dbReference>
<dbReference type="GO" id="GO:0016817">
    <property type="term" value="F:hydrolase activity, acting on acid anhydrides"/>
    <property type="evidence" value="ECO:0007669"/>
    <property type="project" value="InterPro"/>
</dbReference>
<dbReference type="Gene3D" id="3.40.50.300">
    <property type="entry name" value="P-loop containing nucleotide triphosphate hydrolases"/>
    <property type="match status" value="1"/>
</dbReference>
<dbReference type="InterPro" id="IPR056443">
    <property type="entry name" value="AEP_C962R"/>
</dbReference>
<dbReference type="InterPro" id="IPR006500">
    <property type="entry name" value="Helicase_put_C_phage/plasmid"/>
</dbReference>
<dbReference type="InterPro" id="IPR014015">
    <property type="entry name" value="Helicase_SF3_DNA-vir"/>
</dbReference>
<dbReference type="InterPro" id="IPR027417">
    <property type="entry name" value="P-loop_NTPase"/>
</dbReference>
<dbReference type="InterPro" id="IPR014818">
    <property type="entry name" value="Phage/plasmid_primase_P4_C"/>
</dbReference>
<dbReference type="InterPro" id="IPR014819">
    <property type="entry name" value="PriCT_2"/>
</dbReference>
<dbReference type="InterPro" id="IPR051620">
    <property type="entry name" value="Viral_Helicase-Primase_Cplx"/>
</dbReference>
<dbReference type="NCBIfam" id="TIGR01613">
    <property type="entry name" value="primase_Cterm"/>
    <property type="match status" value="1"/>
</dbReference>
<dbReference type="PANTHER" id="PTHR35372">
    <property type="entry name" value="ATP BINDING PROTEIN-RELATED"/>
    <property type="match status" value="1"/>
</dbReference>
<dbReference type="PANTHER" id="PTHR35372:SF2">
    <property type="entry name" value="SF3 HELICASE DOMAIN-CONTAINING PROTEIN"/>
    <property type="match status" value="1"/>
</dbReference>
<dbReference type="Pfam" id="PF23162">
    <property type="entry name" value="AEP_C962R"/>
    <property type="match status" value="1"/>
</dbReference>
<dbReference type="Pfam" id="PF08706">
    <property type="entry name" value="D5_N"/>
    <property type="match status" value="1"/>
</dbReference>
<dbReference type="Pfam" id="PF08707">
    <property type="entry name" value="PriCT_2"/>
    <property type="match status" value="1"/>
</dbReference>
<dbReference type="SUPFAM" id="SSF52540">
    <property type="entry name" value="P-loop containing nucleoside triphosphate hydrolases"/>
    <property type="match status" value="1"/>
</dbReference>
<dbReference type="PROSITE" id="PS51206">
    <property type="entry name" value="SF3_HELICASE_1"/>
    <property type="match status" value="1"/>
</dbReference>
<feature type="chain" id="PRO_0000410581" description="Putative helicase 022R">
    <location>
        <begin position="1"/>
        <end position="973"/>
    </location>
</feature>
<feature type="domain" description="SF3 helicase" evidence="1">
    <location>
        <begin position="658"/>
        <end position="840"/>
    </location>
</feature>
<feature type="region of interest" description="Disordered" evidence="2">
    <location>
        <begin position="473"/>
        <end position="502"/>
    </location>
</feature>
<feature type="compositionally biased region" description="Acidic residues" evidence="2">
    <location>
        <begin position="483"/>
        <end position="498"/>
    </location>
</feature>
<feature type="binding site" evidence="1">
    <location>
        <begin position="702"/>
        <end position="709"/>
    </location>
    <ligand>
        <name>ATP</name>
        <dbReference type="ChEBI" id="CHEBI:30616"/>
    </ligand>
</feature>
<sequence>MANATIKYTTMDLYGILKSCKCSSDERLTHQSLSGGRFSVTGSKVGEFWRAVADRIESGEPIDISEARQKETPLTLDFDVVDKDCKEPVPDVLVNNIHAAVARWARSSLKPAPEDRDLCGVVLTKPVRQCAKGWKKGFHIQYPKLVLETGVAKNLVVGPALRPICSKVWEAVTGTAKDYLDPLSCTVPWLVYGASKPDEPFAWKIARTLDHAGKTIDFNTAFGDVETPPSWGRPTSDRHREAMVLSIHPAGRSVFFRRYDFTAANPGRVTRLADYSAVMAKLDVARQRKPAWNTDATKAHRLKRVTDLTAMLTADLADDRQTWLNVGFCLWQQTSGSAEGYKVWLSFSKKSDKCDEDECWTIWNNQMRPNSFTEGTLVYLAQKHNPGAYLNWLQVKSTPVNDIGTNVAMAKIMWDYYGHQFVCCGGKTQTWYRFDGLTWVESNQGTDLRSLISAEGGPLRRLLMRQLDAVTAAKARGGRDSGNEDDEEDSATDEDDSNPWDSELRRLDSEVLDTMVKRLRNNLKGIEMTGVKNNVLRECAELFYQPEFGDVIDSDPLLFAFANGIYDFREGCLRDGRPEDKLSRRAPVDFVMFGPIPKARHPDNSPVMRPKRMPGESVQDHARRLAECFEQDDVSASAGTMGKEDVESFSCNPNDFKGPVTKLLAFFASVFPDEGTRRFFLRNAAATFVGGNPDKVVLFWTGTGNNGKTVTQTLFEKMLGCFAVKMSTQTLTGRKPSAGSANPEMARLGGGVRWAVMEEPNSDETINAGTLKSMTGNDSFFARDLYCAGKTTFEIKPMFKLHVICNALPGIKDADQATWNRVRVVPFESTFVTPGTTAPADAKYVFPADTDITRKLDRLTAPLAWYLVYCWACIQNERVKYVPPPKVMEATMAYQKEHDLFRQFVEEMLRKDPDSTLTCDDAYTAFRDWTSANSPHGTVRRPKGQVVKCLEAILGKKTVDGWPGYAVGAEQQE</sequence>
<proteinExistence type="predicted"/>
<reference key="1">
    <citation type="journal article" date="2004" name="Virology">
        <title>Comparative genomic analyses of frog virus 3, type species of the genus Ranavirus (family Iridoviridae).</title>
        <authorList>
            <person name="Tan W.G."/>
            <person name="Barkman T.J."/>
            <person name="Gregory Chinchar V."/>
            <person name="Essani K."/>
        </authorList>
    </citation>
    <scope>NUCLEOTIDE SEQUENCE [LARGE SCALE GENOMIC DNA]</scope>
</reference>
<accession>Q6GZV3</accession>
<gene>
    <name type="ORF">FV3-022R</name>
</gene>